<accession>A5DBG1</accession>
<reference key="1">
    <citation type="journal article" date="2009" name="Nature">
        <title>Evolution of pathogenicity and sexual reproduction in eight Candida genomes.</title>
        <authorList>
            <person name="Butler G."/>
            <person name="Rasmussen M.D."/>
            <person name="Lin M.F."/>
            <person name="Santos M.A.S."/>
            <person name="Sakthikumar S."/>
            <person name="Munro C.A."/>
            <person name="Rheinbay E."/>
            <person name="Grabherr M."/>
            <person name="Forche A."/>
            <person name="Reedy J.L."/>
            <person name="Agrafioti I."/>
            <person name="Arnaud M.B."/>
            <person name="Bates S."/>
            <person name="Brown A.J.P."/>
            <person name="Brunke S."/>
            <person name="Costanzo M.C."/>
            <person name="Fitzpatrick D.A."/>
            <person name="de Groot P.W.J."/>
            <person name="Harris D."/>
            <person name="Hoyer L.L."/>
            <person name="Hube B."/>
            <person name="Klis F.M."/>
            <person name="Kodira C."/>
            <person name="Lennard N."/>
            <person name="Logue M.E."/>
            <person name="Martin R."/>
            <person name="Neiman A.M."/>
            <person name="Nikolaou E."/>
            <person name="Quail M.A."/>
            <person name="Quinn J."/>
            <person name="Santos M.C."/>
            <person name="Schmitzberger F.F."/>
            <person name="Sherlock G."/>
            <person name="Shah P."/>
            <person name="Silverstein K.A.T."/>
            <person name="Skrzypek M.S."/>
            <person name="Soll D."/>
            <person name="Staggs R."/>
            <person name="Stansfield I."/>
            <person name="Stumpf M.P.H."/>
            <person name="Sudbery P.E."/>
            <person name="Srikantha T."/>
            <person name="Zeng Q."/>
            <person name="Berman J."/>
            <person name="Berriman M."/>
            <person name="Heitman J."/>
            <person name="Gow N.A.R."/>
            <person name="Lorenz M.C."/>
            <person name="Birren B.W."/>
            <person name="Kellis M."/>
            <person name="Cuomo C.A."/>
        </authorList>
    </citation>
    <scope>NUCLEOTIDE SEQUENCE [LARGE SCALE GENOMIC DNA]</scope>
    <source>
        <strain>ATCC 6260 / CBS 566 / DSM 6381 / JCM 1539 / NBRC 10279 / NRRL Y-324</strain>
    </source>
</reference>
<proteinExistence type="inferred from homology"/>
<gene>
    <name evidence="2" type="primary">ERB1</name>
    <name type="ORF">PGUG_00616</name>
</gene>
<sequence length="790" mass="89709">MAKKNTVTGSKIKRKRQDESPEVSESEEIDVQGLIDDEASEDSEDEVESEDQVFENSDADSDEELNNLIGEEEDVSDVDSEDFSDELQDDSNSITDKLTNVRIRTSSQSSNENVHGLFADGTERIIKPEIEPVYDSDDSDHENFNTIGNIPLSAYEEMPHIGYDINGKRIMRPAKGSALDQLLESIDLPEGWTGLLDQNTGSSLKLTDEELELIRKIQHNENTDDNINPYEPTIEWFTSKTEVMPLTAVPEPKRRFVPSKHEAKRIMKIVRAIRDGRIVPPEKRKEQQDEEQYNFDLWDDNTDEPNEHIMNLRAPKLPPPTNEESYNPPEEYLMTEEERKKWEETDPSERETNFIPQKYGSLRKVPAYQENLRERFERSLDLYLAPRVRHNKLNIDPDSLIPDLPSPKDLRPFPIKCSTIFQGHIGRVRTLSIDPSGLWLATGGDDGTVRVWEILTGRQVYHCDVVDKKKDDDNIDSLEWNPDASVGILAVAAGESVYLLVPTILGYEIENAGRSKIEVGWGYDTYGNKNKRGDLNVNGEEDNESGANEVKKEVTKWLTPMEGQSQQGIAAIIQCRKAVKNLSWHRKGDYFVTVSPDSGNTSVLIHQLSKHLSQSPFRKSKGIIVDAKFHPFKPQLFVASQRSIKIYDLSQQVLTKKLMPGARYLSGIDIHPRGDHLLASSYDKRVLWHDLDLSNTPYKTLRYHEKAVRNIKFHKGRLPLFASASDDGSVHVFHGTVYDDLMTNPLLVPLKKLTGHKVVHSLGVLDLVWHPKEAWLFTAGADGTARLWTT</sequence>
<name>ERB1_PICGU</name>
<keyword id="KW-0539">Nucleus</keyword>
<keyword id="KW-1185">Reference proteome</keyword>
<keyword id="KW-0677">Repeat</keyword>
<keyword id="KW-0690">Ribosome biogenesis</keyword>
<keyword id="KW-0698">rRNA processing</keyword>
<keyword id="KW-0853">WD repeat</keyword>
<evidence type="ECO:0000250" key="1"/>
<evidence type="ECO:0000255" key="2">
    <source>
        <dbReference type="HAMAP-Rule" id="MF_03027"/>
    </source>
</evidence>
<evidence type="ECO:0000256" key="3">
    <source>
        <dbReference type="SAM" id="MobiDB-lite"/>
    </source>
</evidence>
<feature type="chain" id="PRO_0000370438" description="Ribosome biogenesis protein ERB1">
    <location>
        <begin position="1"/>
        <end position="790"/>
    </location>
</feature>
<feature type="repeat" description="WD 1">
    <location>
        <begin position="423"/>
        <end position="462"/>
    </location>
</feature>
<feature type="repeat" description="WD 2">
    <location>
        <begin position="470"/>
        <end position="510"/>
    </location>
</feature>
<feature type="repeat" description="WD 3">
    <location>
        <begin position="574"/>
        <end position="616"/>
    </location>
</feature>
<feature type="repeat" description="WD 4">
    <location>
        <begin position="619"/>
        <end position="657"/>
    </location>
</feature>
<feature type="repeat" description="WD 5">
    <location>
        <begin position="660"/>
        <end position="699"/>
    </location>
</feature>
<feature type="repeat" description="WD 6">
    <location>
        <begin position="703"/>
        <end position="743"/>
    </location>
</feature>
<feature type="repeat" description="WD 7">
    <location>
        <begin position="759"/>
        <end position="790"/>
    </location>
</feature>
<feature type="region of interest" description="Disordered" evidence="3">
    <location>
        <begin position="1"/>
        <end position="93"/>
    </location>
</feature>
<feature type="region of interest" description="Required for interaction with NOP7" evidence="1">
    <location>
        <begin position="255"/>
        <end position="371"/>
    </location>
</feature>
<feature type="region of interest" description="Required for interaction with YTM1" evidence="1">
    <location>
        <begin position="371"/>
        <end position="407"/>
    </location>
</feature>
<feature type="compositionally biased region" description="Acidic residues" evidence="3">
    <location>
        <begin position="20"/>
        <end position="89"/>
    </location>
</feature>
<comment type="function">
    <text evidence="2">Component of the NOP7 complex, which is required for maturation of the 25S and 5.8S ribosomal RNAs and formation of the 60S ribosome.</text>
</comment>
<comment type="subunit">
    <text evidence="2">Component of the NOP7 complex, composed of ERB1, NOP7 and YTM1. The complex is held together by ERB1, which interacts with NOP7 via its N-terminal domain and with YTM1 via a high-affinity interaction between the seven-bladed beta-propeller domains of the 2 proteins. The NOP7 complex associates with the 66S pre-ribosome.</text>
</comment>
<comment type="subcellular location">
    <subcellularLocation>
        <location evidence="2">Nucleus</location>
        <location evidence="2">Nucleolus</location>
    </subcellularLocation>
    <subcellularLocation>
        <location evidence="2">Nucleus</location>
        <location evidence="2">Nucleoplasm</location>
    </subcellularLocation>
</comment>
<comment type="similarity">
    <text evidence="2">Belongs to the WD repeat BOP1/ERB1 family.</text>
</comment>
<dbReference type="EMBL" id="CH408155">
    <property type="protein sequence ID" value="EDK36518.2"/>
    <property type="molecule type" value="Genomic_DNA"/>
</dbReference>
<dbReference type="RefSeq" id="XP_001487239.1">
    <property type="nucleotide sequence ID" value="XM_001487189.1"/>
</dbReference>
<dbReference type="SMR" id="A5DBG1"/>
<dbReference type="FunCoup" id="A5DBG1">
    <property type="interactions" value="1056"/>
</dbReference>
<dbReference type="STRING" id="294746.A5DBG1"/>
<dbReference type="GeneID" id="5128820"/>
<dbReference type="KEGG" id="pgu:PGUG_00616"/>
<dbReference type="VEuPathDB" id="FungiDB:PGUG_00616"/>
<dbReference type="eggNOG" id="KOG0650">
    <property type="taxonomic scope" value="Eukaryota"/>
</dbReference>
<dbReference type="HOGENOM" id="CLU_011390_0_1_1"/>
<dbReference type="InParanoid" id="A5DBG1"/>
<dbReference type="OMA" id="MRPAKGE"/>
<dbReference type="OrthoDB" id="5571054at2759"/>
<dbReference type="Proteomes" id="UP000001997">
    <property type="component" value="Unassembled WGS sequence"/>
</dbReference>
<dbReference type="GO" id="GO:0005654">
    <property type="term" value="C:nucleoplasm"/>
    <property type="evidence" value="ECO:0007669"/>
    <property type="project" value="UniProtKB-SubCell"/>
</dbReference>
<dbReference type="GO" id="GO:0070545">
    <property type="term" value="C:PeBoW complex"/>
    <property type="evidence" value="ECO:0007669"/>
    <property type="project" value="EnsemblFungi"/>
</dbReference>
<dbReference type="GO" id="GO:0030687">
    <property type="term" value="C:preribosome, large subunit precursor"/>
    <property type="evidence" value="ECO:0007669"/>
    <property type="project" value="UniProtKB-UniRule"/>
</dbReference>
<dbReference type="GO" id="GO:0070180">
    <property type="term" value="F:large ribosomal subunit rRNA binding"/>
    <property type="evidence" value="ECO:0007669"/>
    <property type="project" value="EnsemblFungi"/>
</dbReference>
<dbReference type="GO" id="GO:0043021">
    <property type="term" value="F:ribonucleoprotein complex binding"/>
    <property type="evidence" value="ECO:0007669"/>
    <property type="project" value="UniProtKB-UniRule"/>
</dbReference>
<dbReference type="GO" id="GO:0000466">
    <property type="term" value="P:maturation of 5.8S rRNA from tricistronic rRNA transcript (SSU-rRNA, 5.8S rRNA, LSU-rRNA)"/>
    <property type="evidence" value="ECO:0007669"/>
    <property type="project" value="UniProtKB-UniRule"/>
</dbReference>
<dbReference type="GO" id="GO:0000463">
    <property type="term" value="P:maturation of LSU-rRNA from tricistronic rRNA transcript (SSU-rRNA, 5.8S rRNA, LSU-rRNA)"/>
    <property type="evidence" value="ECO:0007669"/>
    <property type="project" value="UniProtKB-UniRule"/>
</dbReference>
<dbReference type="FunFam" id="2.130.10.10:FF:000061">
    <property type="entry name" value="Ribosome biogenesis protein BOP1 homolog"/>
    <property type="match status" value="1"/>
</dbReference>
<dbReference type="Gene3D" id="2.130.10.10">
    <property type="entry name" value="YVTN repeat-like/Quinoprotein amine dehydrogenase"/>
    <property type="match status" value="1"/>
</dbReference>
<dbReference type="HAMAP" id="MF_03027">
    <property type="entry name" value="BOP1"/>
    <property type="match status" value="1"/>
</dbReference>
<dbReference type="InterPro" id="IPR028598">
    <property type="entry name" value="BOP1/Erb1"/>
</dbReference>
<dbReference type="InterPro" id="IPR012953">
    <property type="entry name" value="BOP1_N_dom"/>
</dbReference>
<dbReference type="InterPro" id="IPR015943">
    <property type="entry name" value="WD40/YVTN_repeat-like_dom_sf"/>
</dbReference>
<dbReference type="InterPro" id="IPR019775">
    <property type="entry name" value="WD40_repeat_CS"/>
</dbReference>
<dbReference type="InterPro" id="IPR036322">
    <property type="entry name" value="WD40_repeat_dom_sf"/>
</dbReference>
<dbReference type="InterPro" id="IPR001680">
    <property type="entry name" value="WD40_rpt"/>
</dbReference>
<dbReference type="PANTHER" id="PTHR17605:SF0">
    <property type="entry name" value="RIBOSOME BIOGENESIS PROTEIN BOP1"/>
    <property type="match status" value="1"/>
</dbReference>
<dbReference type="PANTHER" id="PTHR17605">
    <property type="entry name" value="RIBOSOME BIOGENESIS PROTEIN BOP1 BLOCK OF PROLIFERATION 1 PROTEIN"/>
    <property type="match status" value="1"/>
</dbReference>
<dbReference type="Pfam" id="PF08145">
    <property type="entry name" value="BOP1NT"/>
    <property type="match status" value="1"/>
</dbReference>
<dbReference type="Pfam" id="PF00400">
    <property type="entry name" value="WD40"/>
    <property type="match status" value="3"/>
</dbReference>
<dbReference type="SMART" id="SM01035">
    <property type="entry name" value="BOP1NT"/>
    <property type="match status" value="1"/>
</dbReference>
<dbReference type="SMART" id="SM00320">
    <property type="entry name" value="WD40"/>
    <property type="match status" value="6"/>
</dbReference>
<dbReference type="SUPFAM" id="SSF50978">
    <property type="entry name" value="WD40 repeat-like"/>
    <property type="match status" value="1"/>
</dbReference>
<dbReference type="PROSITE" id="PS00678">
    <property type="entry name" value="WD_REPEATS_1"/>
    <property type="match status" value="1"/>
</dbReference>
<dbReference type="PROSITE" id="PS50082">
    <property type="entry name" value="WD_REPEATS_2"/>
    <property type="match status" value="2"/>
</dbReference>
<dbReference type="PROSITE" id="PS50294">
    <property type="entry name" value="WD_REPEATS_REGION"/>
    <property type="match status" value="2"/>
</dbReference>
<protein>
    <recommendedName>
        <fullName evidence="2">Ribosome biogenesis protein ERB1</fullName>
    </recommendedName>
    <alternativeName>
        <fullName evidence="2">Eukaryotic ribosome biogenesis protein 1</fullName>
    </alternativeName>
</protein>
<organism>
    <name type="scientific">Meyerozyma guilliermondii (strain ATCC 6260 / CBS 566 / DSM 6381 / JCM 1539 / NBRC 10279 / NRRL Y-324)</name>
    <name type="common">Yeast</name>
    <name type="synonym">Candida guilliermondii</name>
    <dbReference type="NCBI Taxonomy" id="294746"/>
    <lineage>
        <taxon>Eukaryota</taxon>
        <taxon>Fungi</taxon>
        <taxon>Dikarya</taxon>
        <taxon>Ascomycota</taxon>
        <taxon>Saccharomycotina</taxon>
        <taxon>Pichiomycetes</taxon>
        <taxon>Debaryomycetaceae</taxon>
        <taxon>Meyerozyma</taxon>
    </lineage>
</organism>